<sequence length="271" mass="28686">MTYLQESSRPAVTVPKLQAMRDAGEKIAMLTCYDASFSALLDRSGVDVLLIGDSLGNVLQGHTTTLPVSLDDIAYHTACVARAQPRALIMADLPFGTYGTPAEAFASSVKLMRAGAQMVKLEGGEWLAETIRFLVERAVPVCAHVGLTPQSVHAFGGFKVQGKTEAGAAQLLRDARAVEAAGAQVVLLEAVPTLIGSEVTHMLRVPTIGIGAGADCSGQVLVLHDMLGVFPGKRPRFVKDFMQGEPNIQAAVEAYVRAVKDGSFPGPEHSF</sequence>
<evidence type="ECO:0000255" key="1">
    <source>
        <dbReference type="HAMAP-Rule" id="MF_00156"/>
    </source>
</evidence>
<protein>
    <recommendedName>
        <fullName evidence="1">3-methyl-2-oxobutanoate hydroxymethyltransferase 2</fullName>
        <ecNumber evidence="1">2.1.2.11</ecNumber>
    </recommendedName>
    <alternativeName>
        <fullName evidence="1">Ketopantoate hydroxymethyltransferase 2</fullName>
        <shortName evidence="1">KPHMT 2</shortName>
    </alternativeName>
</protein>
<gene>
    <name evidence="1" type="primary">panB2</name>
    <name type="ordered locus">Bcep18194_A3842</name>
</gene>
<accession>Q39JC5</accession>
<feature type="chain" id="PRO_0000297236" description="3-methyl-2-oxobutanoate hydroxymethyltransferase 2">
    <location>
        <begin position="1"/>
        <end position="271"/>
    </location>
</feature>
<feature type="active site" description="Proton acceptor" evidence="1">
    <location>
        <position position="189"/>
    </location>
</feature>
<feature type="binding site" evidence="1">
    <location>
        <begin position="53"/>
        <end position="54"/>
    </location>
    <ligand>
        <name>3-methyl-2-oxobutanoate</name>
        <dbReference type="ChEBI" id="CHEBI:11851"/>
    </ligand>
</feature>
<feature type="binding site" evidence="1">
    <location>
        <position position="53"/>
    </location>
    <ligand>
        <name>Mg(2+)</name>
        <dbReference type="ChEBI" id="CHEBI:18420"/>
    </ligand>
</feature>
<feature type="binding site" evidence="1">
    <location>
        <position position="92"/>
    </location>
    <ligand>
        <name>3-methyl-2-oxobutanoate</name>
        <dbReference type="ChEBI" id="CHEBI:11851"/>
    </ligand>
</feature>
<feature type="binding site" evidence="1">
    <location>
        <position position="92"/>
    </location>
    <ligand>
        <name>Mg(2+)</name>
        <dbReference type="ChEBI" id="CHEBI:18420"/>
    </ligand>
</feature>
<feature type="binding site" evidence="1">
    <location>
        <position position="120"/>
    </location>
    <ligand>
        <name>3-methyl-2-oxobutanoate</name>
        <dbReference type="ChEBI" id="CHEBI:11851"/>
    </ligand>
</feature>
<feature type="binding site" evidence="1">
    <location>
        <position position="122"/>
    </location>
    <ligand>
        <name>Mg(2+)</name>
        <dbReference type="ChEBI" id="CHEBI:18420"/>
    </ligand>
</feature>
<reference key="1">
    <citation type="submission" date="2005-10" db="EMBL/GenBank/DDBJ databases">
        <title>Complete sequence of chromosome 1 of Burkholderia sp. 383.</title>
        <authorList>
            <consortium name="US DOE Joint Genome Institute"/>
            <person name="Copeland A."/>
            <person name="Lucas S."/>
            <person name="Lapidus A."/>
            <person name="Barry K."/>
            <person name="Detter J.C."/>
            <person name="Glavina T."/>
            <person name="Hammon N."/>
            <person name="Israni S."/>
            <person name="Pitluck S."/>
            <person name="Chain P."/>
            <person name="Malfatti S."/>
            <person name="Shin M."/>
            <person name="Vergez L."/>
            <person name="Schmutz J."/>
            <person name="Larimer F."/>
            <person name="Land M."/>
            <person name="Kyrpides N."/>
            <person name="Lykidis A."/>
            <person name="Richardson P."/>
        </authorList>
    </citation>
    <scope>NUCLEOTIDE SEQUENCE [LARGE SCALE GENOMIC DNA]</scope>
    <source>
        <strain>ATCC 17760 / DSM 23089 / LMG 22485 / NCIMB 9086 / R18194 / 383</strain>
    </source>
</reference>
<keyword id="KW-0963">Cytoplasm</keyword>
<keyword id="KW-0460">Magnesium</keyword>
<keyword id="KW-0479">Metal-binding</keyword>
<keyword id="KW-0566">Pantothenate biosynthesis</keyword>
<keyword id="KW-0808">Transferase</keyword>
<proteinExistence type="inferred from homology"/>
<comment type="function">
    <text evidence="1">Catalyzes the reversible reaction in which hydroxymethyl group from 5,10-methylenetetrahydrofolate is transferred onto alpha-ketoisovalerate to form ketopantoate.</text>
</comment>
<comment type="catalytic activity">
    <reaction evidence="1">
        <text>3-methyl-2-oxobutanoate + (6R)-5,10-methylene-5,6,7,8-tetrahydrofolate + H2O = 2-dehydropantoate + (6S)-5,6,7,8-tetrahydrofolate</text>
        <dbReference type="Rhea" id="RHEA:11824"/>
        <dbReference type="ChEBI" id="CHEBI:11561"/>
        <dbReference type="ChEBI" id="CHEBI:11851"/>
        <dbReference type="ChEBI" id="CHEBI:15377"/>
        <dbReference type="ChEBI" id="CHEBI:15636"/>
        <dbReference type="ChEBI" id="CHEBI:57453"/>
        <dbReference type="EC" id="2.1.2.11"/>
    </reaction>
</comment>
<comment type="cofactor">
    <cofactor evidence="1">
        <name>Mg(2+)</name>
        <dbReference type="ChEBI" id="CHEBI:18420"/>
    </cofactor>
    <text evidence="1">Binds 1 Mg(2+) ion per subunit.</text>
</comment>
<comment type="pathway">
    <text evidence="1">Cofactor biosynthesis; (R)-pantothenate biosynthesis; (R)-pantoate from 3-methyl-2-oxobutanoate: step 1/2.</text>
</comment>
<comment type="subunit">
    <text evidence="1">Homodecamer; pentamer of dimers.</text>
</comment>
<comment type="subcellular location">
    <subcellularLocation>
        <location evidence="1">Cytoplasm</location>
    </subcellularLocation>
</comment>
<comment type="similarity">
    <text evidence="1">Belongs to the PanB family.</text>
</comment>
<dbReference type="EC" id="2.1.2.11" evidence="1"/>
<dbReference type="EMBL" id="CP000151">
    <property type="protein sequence ID" value="ABB07441.1"/>
    <property type="molecule type" value="Genomic_DNA"/>
</dbReference>
<dbReference type="SMR" id="Q39JC5"/>
<dbReference type="GeneID" id="45093753"/>
<dbReference type="KEGG" id="bur:Bcep18194_A3842"/>
<dbReference type="PATRIC" id="fig|482957.22.peg.709"/>
<dbReference type="HOGENOM" id="CLU_036645_1_0_4"/>
<dbReference type="UniPathway" id="UPA00028">
    <property type="reaction ID" value="UER00003"/>
</dbReference>
<dbReference type="Proteomes" id="UP000002705">
    <property type="component" value="Chromosome 1"/>
</dbReference>
<dbReference type="GO" id="GO:0005737">
    <property type="term" value="C:cytoplasm"/>
    <property type="evidence" value="ECO:0007669"/>
    <property type="project" value="UniProtKB-SubCell"/>
</dbReference>
<dbReference type="GO" id="GO:0003864">
    <property type="term" value="F:3-methyl-2-oxobutanoate hydroxymethyltransferase activity"/>
    <property type="evidence" value="ECO:0007669"/>
    <property type="project" value="UniProtKB-UniRule"/>
</dbReference>
<dbReference type="GO" id="GO:0000287">
    <property type="term" value="F:magnesium ion binding"/>
    <property type="evidence" value="ECO:0007669"/>
    <property type="project" value="TreeGrafter"/>
</dbReference>
<dbReference type="GO" id="GO:0015940">
    <property type="term" value="P:pantothenate biosynthetic process"/>
    <property type="evidence" value="ECO:0007669"/>
    <property type="project" value="UniProtKB-UniRule"/>
</dbReference>
<dbReference type="CDD" id="cd06557">
    <property type="entry name" value="KPHMT-like"/>
    <property type="match status" value="1"/>
</dbReference>
<dbReference type="FunFam" id="3.20.20.60:FF:000003">
    <property type="entry name" value="3-methyl-2-oxobutanoate hydroxymethyltransferase"/>
    <property type="match status" value="1"/>
</dbReference>
<dbReference type="Gene3D" id="3.20.20.60">
    <property type="entry name" value="Phosphoenolpyruvate-binding domains"/>
    <property type="match status" value="1"/>
</dbReference>
<dbReference type="HAMAP" id="MF_00156">
    <property type="entry name" value="PanB"/>
    <property type="match status" value="1"/>
</dbReference>
<dbReference type="InterPro" id="IPR003700">
    <property type="entry name" value="Pantoate_hydroxy_MeTrfase"/>
</dbReference>
<dbReference type="InterPro" id="IPR015813">
    <property type="entry name" value="Pyrv/PenolPyrv_kinase-like_dom"/>
</dbReference>
<dbReference type="InterPro" id="IPR040442">
    <property type="entry name" value="Pyrv_kinase-like_dom_sf"/>
</dbReference>
<dbReference type="NCBIfam" id="TIGR00222">
    <property type="entry name" value="panB"/>
    <property type="match status" value="1"/>
</dbReference>
<dbReference type="NCBIfam" id="NF001452">
    <property type="entry name" value="PRK00311.1"/>
    <property type="match status" value="1"/>
</dbReference>
<dbReference type="PANTHER" id="PTHR20881">
    <property type="entry name" value="3-METHYL-2-OXOBUTANOATE HYDROXYMETHYLTRANSFERASE"/>
    <property type="match status" value="1"/>
</dbReference>
<dbReference type="PANTHER" id="PTHR20881:SF0">
    <property type="entry name" value="3-METHYL-2-OXOBUTANOATE HYDROXYMETHYLTRANSFERASE"/>
    <property type="match status" value="1"/>
</dbReference>
<dbReference type="Pfam" id="PF02548">
    <property type="entry name" value="Pantoate_transf"/>
    <property type="match status" value="1"/>
</dbReference>
<dbReference type="PIRSF" id="PIRSF000388">
    <property type="entry name" value="Pantoate_hydroxy_MeTrfase"/>
    <property type="match status" value="1"/>
</dbReference>
<dbReference type="SUPFAM" id="SSF51621">
    <property type="entry name" value="Phosphoenolpyruvate/pyruvate domain"/>
    <property type="match status" value="1"/>
</dbReference>
<organism>
    <name type="scientific">Burkholderia lata (strain ATCC 17760 / DSM 23089 / LMG 22485 / NCIMB 9086 / R18194 / 383)</name>
    <dbReference type="NCBI Taxonomy" id="482957"/>
    <lineage>
        <taxon>Bacteria</taxon>
        <taxon>Pseudomonadati</taxon>
        <taxon>Pseudomonadota</taxon>
        <taxon>Betaproteobacteria</taxon>
        <taxon>Burkholderiales</taxon>
        <taxon>Burkholderiaceae</taxon>
        <taxon>Burkholderia</taxon>
        <taxon>Burkholderia cepacia complex</taxon>
    </lineage>
</organism>
<name>PANB2_BURL3</name>